<organism>
    <name type="scientific">Parasynechococcus marenigrum (strain WH8102)</name>
    <dbReference type="NCBI Taxonomy" id="84588"/>
    <lineage>
        <taxon>Bacteria</taxon>
        <taxon>Bacillati</taxon>
        <taxon>Cyanobacteriota</taxon>
        <taxon>Cyanophyceae</taxon>
        <taxon>Synechococcales</taxon>
        <taxon>Prochlorococcaceae</taxon>
        <taxon>Parasynechococcus</taxon>
        <taxon>Parasynechococcus marenigrum</taxon>
    </lineage>
</organism>
<name>COAD_PARMW</name>
<reference key="1">
    <citation type="journal article" date="2003" name="Nature">
        <title>The genome of a motile marine Synechococcus.</title>
        <authorList>
            <person name="Palenik B."/>
            <person name="Brahamsha B."/>
            <person name="Larimer F.W."/>
            <person name="Land M.L."/>
            <person name="Hauser L."/>
            <person name="Chain P."/>
            <person name="Lamerdin J.E."/>
            <person name="Regala W."/>
            <person name="Allen E.E."/>
            <person name="McCarren J."/>
            <person name="Paulsen I.T."/>
            <person name="Dufresne A."/>
            <person name="Partensky F."/>
            <person name="Webb E.A."/>
            <person name="Waterbury J."/>
        </authorList>
    </citation>
    <scope>NUCLEOTIDE SEQUENCE [LARGE SCALE GENOMIC DNA]</scope>
    <source>
        <strain>WH8102</strain>
    </source>
</reference>
<evidence type="ECO:0000255" key="1">
    <source>
        <dbReference type="HAMAP-Rule" id="MF_00151"/>
    </source>
</evidence>
<dbReference type="EC" id="2.7.7.3" evidence="1"/>
<dbReference type="EMBL" id="BX569692">
    <property type="protein sequence ID" value="CAE07763.1"/>
    <property type="molecule type" value="Genomic_DNA"/>
</dbReference>
<dbReference type="RefSeq" id="WP_011128112.1">
    <property type="nucleotide sequence ID" value="NC_005070.1"/>
</dbReference>
<dbReference type="SMR" id="Q7U6T8"/>
<dbReference type="STRING" id="84588.SYNW1248"/>
<dbReference type="KEGG" id="syw:SYNW1248"/>
<dbReference type="eggNOG" id="COG0669">
    <property type="taxonomic scope" value="Bacteria"/>
</dbReference>
<dbReference type="HOGENOM" id="CLU_100149_0_1_3"/>
<dbReference type="UniPathway" id="UPA00241">
    <property type="reaction ID" value="UER00355"/>
</dbReference>
<dbReference type="Proteomes" id="UP000001422">
    <property type="component" value="Chromosome"/>
</dbReference>
<dbReference type="GO" id="GO:0005737">
    <property type="term" value="C:cytoplasm"/>
    <property type="evidence" value="ECO:0007669"/>
    <property type="project" value="UniProtKB-SubCell"/>
</dbReference>
<dbReference type="GO" id="GO:0005524">
    <property type="term" value="F:ATP binding"/>
    <property type="evidence" value="ECO:0007669"/>
    <property type="project" value="UniProtKB-KW"/>
</dbReference>
<dbReference type="GO" id="GO:0004595">
    <property type="term" value="F:pantetheine-phosphate adenylyltransferase activity"/>
    <property type="evidence" value="ECO:0007669"/>
    <property type="project" value="UniProtKB-UniRule"/>
</dbReference>
<dbReference type="GO" id="GO:0015937">
    <property type="term" value="P:coenzyme A biosynthetic process"/>
    <property type="evidence" value="ECO:0007669"/>
    <property type="project" value="UniProtKB-UniRule"/>
</dbReference>
<dbReference type="CDD" id="cd02163">
    <property type="entry name" value="PPAT"/>
    <property type="match status" value="1"/>
</dbReference>
<dbReference type="Gene3D" id="3.40.50.620">
    <property type="entry name" value="HUPs"/>
    <property type="match status" value="1"/>
</dbReference>
<dbReference type="HAMAP" id="MF_00151">
    <property type="entry name" value="PPAT_bact"/>
    <property type="match status" value="1"/>
</dbReference>
<dbReference type="InterPro" id="IPR004821">
    <property type="entry name" value="Cyt_trans-like"/>
</dbReference>
<dbReference type="InterPro" id="IPR001980">
    <property type="entry name" value="PPAT"/>
</dbReference>
<dbReference type="InterPro" id="IPR014729">
    <property type="entry name" value="Rossmann-like_a/b/a_fold"/>
</dbReference>
<dbReference type="NCBIfam" id="TIGR01510">
    <property type="entry name" value="coaD_prev_kdtB"/>
    <property type="match status" value="1"/>
</dbReference>
<dbReference type="NCBIfam" id="TIGR00125">
    <property type="entry name" value="cyt_tran_rel"/>
    <property type="match status" value="1"/>
</dbReference>
<dbReference type="PANTHER" id="PTHR21342">
    <property type="entry name" value="PHOSPHOPANTETHEINE ADENYLYLTRANSFERASE"/>
    <property type="match status" value="1"/>
</dbReference>
<dbReference type="PANTHER" id="PTHR21342:SF1">
    <property type="entry name" value="PHOSPHOPANTETHEINE ADENYLYLTRANSFERASE"/>
    <property type="match status" value="1"/>
</dbReference>
<dbReference type="Pfam" id="PF01467">
    <property type="entry name" value="CTP_transf_like"/>
    <property type="match status" value="1"/>
</dbReference>
<dbReference type="PRINTS" id="PR01020">
    <property type="entry name" value="LPSBIOSNTHSS"/>
</dbReference>
<dbReference type="SUPFAM" id="SSF52374">
    <property type="entry name" value="Nucleotidylyl transferase"/>
    <property type="match status" value="1"/>
</dbReference>
<protein>
    <recommendedName>
        <fullName evidence="1">Phosphopantetheine adenylyltransferase</fullName>
        <ecNumber evidence="1">2.7.7.3</ecNumber>
    </recommendedName>
    <alternativeName>
        <fullName evidence="1">Dephospho-CoA pyrophosphorylase</fullName>
    </alternativeName>
    <alternativeName>
        <fullName evidence="1">Pantetheine-phosphate adenylyltransferase</fullName>
        <shortName evidence="1">PPAT</shortName>
    </alternativeName>
</protein>
<keyword id="KW-0067">ATP-binding</keyword>
<keyword id="KW-0173">Coenzyme A biosynthesis</keyword>
<keyword id="KW-0963">Cytoplasm</keyword>
<keyword id="KW-0460">Magnesium</keyword>
<keyword id="KW-0547">Nucleotide-binding</keyword>
<keyword id="KW-0548">Nucleotidyltransferase</keyword>
<keyword id="KW-0808">Transferase</keyword>
<proteinExistence type="inferred from homology"/>
<accession>Q7U6T8</accession>
<sequence length="163" mass="18019">MRALYPGSFDPLTNGHMDLIERAVALFGQVTVAVLSNPNKKPAFSVDQRIGQIQCATRHLNGIDVVSFDGLTVHCAVTHQADLILRGLRAMSDFEYELQIAHTNRSLAEDLETVFLATSTRHSFLSSSVVKEVARFGGPVDHMVPKEVAKDLNRLFNSTFPPR</sequence>
<comment type="function">
    <text evidence="1">Reversibly transfers an adenylyl group from ATP to 4'-phosphopantetheine, yielding dephospho-CoA (dPCoA) and pyrophosphate.</text>
</comment>
<comment type="catalytic activity">
    <reaction evidence="1">
        <text>(R)-4'-phosphopantetheine + ATP + H(+) = 3'-dephospho-CoA + diphosphate</text>
        <dbReference type="Rhea" id="RHEA:19801"/>
        <dbReference type="ChEBI" id="CHEBI:15378"/>
        <dbReference type="ChEBI" id="CHEBI:30616"/>
        <dbReference type="ChEBI" id="CHEBI:33019"/>
        <dbReference type="ChEBI" id="CHEBI:57328"/>
        <dbReference type="ChEBI" id="CHEBI:61723"/>
        <dbReference type="EC" id="2.7.7.3"/>
    </reaction>
</comment>
<comment type="cofactor">
    <cofactor evidence="1">
        <name>Mg(2+)</name>
        <dbReference type="ChEBI" id="CHEBI:18420"/>
    </cofactor>
</comment>
<comment type="pathway">
    <text evidence="1">Cofactor biosynthesis; coenzyme A biosynthesis; CoA from (R)-pantothenate: step 4/5.</text>
</comment>
<comment type="subunit">
    <text evidence="1">Homohexamer.</text>
</comment>
<comment type="subcellular location">
    <subcellularLocation>
        <location evidence="1">Cytoplasm</location>
    </subcellularLocation>
</comment>
<comment type="similarity">
    <text evidence="1">Belongs to the bacterial CoaD family.</text>
</comment>
<gene>
    <name evidence="1" type="primary">coaD</name>
    <name type="ordered locus">SYNW1248</name>
</gene>
<feature type="chain" id="PRO_0000156294" description="Phosphopantetheine adenylyltransferase">
    <location>
        <begin position="1"/>
        <end position="163"/>
    </location>
</feature>
<feature type="binding site" evidence="1">
    <location>
        <begin position="8"/>
        <end position="9"/>
    </location>
    <ligand>
        <name>ATP</name>
        <dbReference type="ChEBI" id="CHEBI:30616"/>
    </ligand>
</feature>
<feature type="binding site" evidence="1">
    <location>
        <position position="8"/>
    </location>
    <ligand>
        <name>substrate</name>
    </ligand>
</feature>
<feature type="binding site" evidence="1">
    <location>
        <position position="16"/>
    </location>
    <ligand>
        <name>ATP</name>
        <dbReference type="ChEBI" id="CHEBI:30616"/>
    </ligand>
</feature>
<feature type="binding site" evidence="1">
    <location>
        <position position="40"/>
    </location>
    <ligand>
        <name>substrate</name>
    </ligand>
</feature>
<feature type="binding site" evidence="1">
    <location>
        <position position="72"/>
    </location>
    <ligand>
        <name>substrate</name>
    </ligand>
</feature>
<feature type="binding site" evidence="1">
    <location>
        <position position="86"/>
    </location>
    <ligand>
        <name>substrate</name>
    </ligand>
</feature>
<feature type="binding site" evidence="1">
    <location>
        <begin position="87"/>
        <end position="89"/>
    </location>
    <ligand>
        <name>ATP</name>
        <dbReference type="ChEBI" id="CHEBI:30616"/>
    </ligand>
</feature>
<feature type="binding site" evidence="1">
    <location>
        <position position="97"/>
    </location>
    <ligand>
        <name>ATP</name>
        <dbReference type="ChEBI" id="CHEBI:30616"/>
    </ligand>
</feature>
<feature type="binding site" evidence="1">
    <location>
        <begin position="122"/>
        <end position="128"/>
    </location>
    <ligand>
        <name>ATP</name>
        <dbReference type="ChEBI" id="CHEBI:30616"/>
    </ligand>
</feature>
<feature type="site" description="Transition state stabilizer" evidence="1">
    <location>
        <position position="16"/>
    </location>
</feature>